<dbReference type="EMBL" id="CP001407">
    <property type="protein sequence ID" value="ACO28926.1"/>
    <property type="molecule type" value="Genomic_DNA"/>
</dbReference>
<dbReference type="RefSeq" id="WP_000926516.1">
    <property type="nucleotide sequence ID" value="NZ_CP009318.1"/>
</dbReference>
<dbReference type="SMR" id="C1EN94"/>
<dbReference type="GeneID" id="93007528"/>
<dbReference type="KEGG" id="bcx:BCA_3747"/>
<dbReference type="PATRIC" id="fig|572264.18.peg.3708"/>
<dbReference type="Proteomes" id="UP000002210">
    <property type="component" value="Chromosome"/>
</dbReference>
<dbReference type="GO" id="GO:0003729">
    <property type="term" value="F:mRNA binding"/>
    <property type="evidence" value="ECO:0007669"/>
    <property type="project" value="UniProtKB-UniRule"/>
</dbReference>
<dbReference type="GO" id="GO:0006547">
    <property type="term" value="P:L-histidine metabolic process"/>
    <property type="evidence" value="ECO:0007669"/>
    <property type="project" value="UniProtKB-UniRule"/>
</dbReference>
<dbReference type="GO" id="GO:0010628">
    <property type="term" value="P:positive regulation of gene expression"/>
    <property type="evidence" value="ECO:0007669"/>
    <property type="project" value="UniProtKB-UniRule"/>
</dbReference>
<dbReference type="FunFam" id="3.40.1510.10:FF:000001">
    <property type="entry name" value="Hut operon positive regulatory protein"/>
    <property type="match status" value="1"/>
</dbReference>
<dbReference type="Gene3D" id="3.40.1510.10">
    <property type="entry name" value="Hut operon regulatory protein HutP"/>
    <property type="match status" value="1"/>
</dbReference>
<dbReference type="HAMAP" id="MF_00779">
    <property type="entry name" value="HutP"/>
    <property type="match status" value="1"/>
</dbReference>
<dbReference type="InterPro" id="IPR015111">
    <property type="entry name" value="Regulatory_HutP"/>
</dbReference>
<dbReference type="InterPro" id="IPR023552">
    <property type="entry name" value="Regulatory_HutP_bacillales"/>
</dbReference>
<dbReference type="InterPro" id="IPR036482">
    <property type="entry name" value="Regulatory_HutP_sf"/>
</dbReference>
<dbReference type="NCBIfam" id="NF002838">
    <property type="entry name" value="PRK03065.1"/>
    <property type="match status" value="1"/>
</dbReference>
<dbReference type="Pfam" id="PF09021">
    <property type="entry name" value="HutP"/>
    <property type="match status" value="1"/>
</dbReference>
<dbReference type="SUPFAM" id="SSF111064">
    <property type="entry name" value="Hut operon positive regulatory protein HutP"/>
    <property type="match status" value="1"/>
</dbReference>
<name>HUTP_BACC3</name>
<reference key="1">
    <citation type="submission" date="2009-02" db="EMBL/GenBank/DDBJ databases">
        <title>Genome sequence of Bacillus cereus 03BB102.</title>
        <authorList>
            <person name="Dodson R.J."/>
            <person name="Jackson P."/>
            <person name="Munk A.C."/>
            <person name="Brettin T."/>
            <person name="Bruce D."/>
            <person name="Detter C."/>
            <person name="Tapia R."/>
            <person name="Han C."/>
            <person name="Sutton G."/>
            <person name="Sims D."/>
        </authorList>
    </citation>
    <scope>NUCLEOTIDE SEQUENCE [LARGE SCALE GENOMIC DNA]</scope>
    <source>
        <strain>03BB102</strain>
    </source>
</reference>
<sequence length="146" mass="15822">MLLQGTHRIGRMAMLLALADENESPVLSIPKGWKYCTGKVGSMNSQKVVAAMETAAKSNQVIETDVYRETHALYHAIMEALYGVTRGQIQLADVLRTVGLRFAIVRGTPYDGKKEGEWVAVALYGTIGAPVKGSEHEAIGLGINHI</sequence>
<accession>C1EN94</accession>
<protein>
    <recommendedName>
        <fullName evidence="1">Hut operon positive regulatory protein</fullName>
    </recommendedName>
</protein>
<comment type="function">
    <text evidence="1">Antiterminator that binds to cis-acting regulatory sequences on the mRNA in the presence of histidine, thereby suppressing transcription termination and activating the hut operon for histidine utilization.</text>
</comment>
<comment type="subunit">
    <text evidence="1">Homohexamer.</text>
</comment>
<comment type="similarity">
    <text evidence="1">Belongs to the HutP family.</text>
</comment>
<gene>
    <name evidence="1" type="primary">hutP</name>
    <name type="ordered locus">BCA_3747</name>
</gene>
<feature type="chain" id="PRO_1000148461" description="Hut operon positive regulatory protein">
    <location>
        <begin position="1"/>
        <end position="146"/>
    </location>
</feature>
<proteinExistence type="inferred from homology"/>
<keyword id="KW-0010">Activator</keyword>
<keyword id="KW-0369">Histidine metabolism</keyword>
<keyword id="KW-0694">RNA-binding</keyword>
<keyword id="KW-0804">Transcription</keyword>
<keyword id="KW-0805">Transcription regulation</keyword>
<evidence type="ECO:0000255" key="1">
    <source>
        <dbReference type="HAMAP-Rule" id="MF_00779"/>
    </source>
</evidence>
<organism>
    <name type="scientific">Bacillus cereus (strain 03BB102)</name>
    <dbReference type="NCBI Taxonomy" id="572264"/>
    <lineage>
        <taxon>Bacteria</taxon>
        <taxon>Bacillati</taxon>
        <taxon>Bacillota</taxon>
        <taxon>Bacilli</taxon>
        <taxon>Bacillales</taxon>
        <taxon>Bacillaceae</taxon>
        <taxon>Bacillus</taxon>
        <taxon>Bacillus cereus group</taxon>
    </lineage>
</organism>